<feature type="chain" id="PRO_0000443119" description="Hemoglobin subunit alpha">
    <location>
        <begin position="1"/>
        <end position="124"/>
    </location>
</feature>
<feature type="domain" description="Globin" evidence="2">
    <location>
        <begin position="1"/>
        <end position="124"/>
    </location>
</feature>
<feature type="binding site" evidence="2">
    <location>
        <position position="57"/>
    </location>
    <ligand>
        <name>O2</name>
        <dbReference type="ChEBI" id="CHEBI:15379"/>
    </ligand>
</feature>
<feature type="binding site" description="proximal binding residue" evidence="2">
    <location>
        <position position="79"/>
    </location>
    <ligand>
        <name>heme b</name>
        <dbReference type="ChEBI" id="CHEBI:60344"/>
    </ligand>
    <ligandPart>
        <name>Fe</name>
        <dbReference type="ChEBI" id="CHEBI:18248"/>
    </ligandPart>
</feature>
<feature type="non-consecutive residues" evidence="4">
    <location>
        <begin position="57"/>
        <end position="58"/>
    </location>
</feature>
<feature type="non-consecutive residues" evidence="4">
    <location>
        <begin position="74"/>
        <end position="75"/>
    </location>
</feature>
<feature type="non-consecutive residues" evidence="4">
    <location>
        <begin position="105"/>
        <end position="106"/>
    </location>
</feature>
<accession>C0HJZ2</accession>
<dbReference type="SMR" id="C0HJZ2"/>
<dbReference type="GO" id="GO:0072562">
    <property type="term" value="C:blood microparticle"/>
    <property type="evidence" value="ECO:0007669"/>
    <property type="project" value="TreeGrafter"/>
</dbReference>
<dbReference type="GO" id="GO:0031838">
    <property type="term" value="C:haptoglobin-hemoglobin complex"/>
    <property type="evidence" value="ECO:0007669"/>
    <property type="project" value="TreeGrafter"/>
</dbReference>
<dbReference type="GO" id="GO:0005833">
    <property type="term" value="C:hemoglobin complex"/>
    <property type="evidence" value="ECO:0007669"/>
    <property type="project" value="TreeGrafter"/>
</dbReference>
<dbReference type="GO" id="GO:0031720">
    <property type="term" value="F:haptoglobin binding"/>
    <property type="evidence" value="ECO:0007669"/>
    <property type="project" value="TreeGrafter"/>
</dbReference>
<dbReference type="GO" id="GO:0020037">
    <property type="term" value="F:heme binding"/>
    <property type="evidence" value="ECO:0007669"/>
    <property type="project" value="InterPro"/>
</dbReference>
<dbReference type="GO" id="GO:0046872">
    <property type="term" value="F:metal ion binding"/>
    <property type="evidence" value="ECO:0007669"/>
    <property type="project" value="UniProtKB-KW"/>
</dbReference>
<dbReference type="GO" id="GO:0043177">
    <property type="term" value="F:organic acid binding"/>
    <property type="evidence" value="ECO:0007669"/>
    <property type="project" value="TreeGrafter"/>
</dbReference>
<dbReference type="GO" id="GO:0019825">
    <property type="term" value="F:oxygen binding"/>
    <property type="evidence" value="ECO:0007669"/>
    <property type="project" value="InterPro"/>
</dbReference>
<dbReference type="GO" id="GO:0005344">
    <property type="term" value="F:oxygen carrier activity"/>
    <property type="evidence" value="ECO:0007669"/>
    <property type="project" value="UniProtKB-KW"/>
</dbReference>
<dbReference type="GO" id="GO:0004601">
    <property type="term" value="F:peroxidase activity"/>
    <property type="evidence" value="ECO:0007669"/>
    <property type="project" value="TreeGrafter"/>
</dbReference>
<dbReference type="GO" id="GO:0042744">
    <property type="term" value="P:hydrogen peroxide catabolic process"/>
    <property type="evidence" value="ECO:0007669"/>
    <property type="project" value="TreeGrafter"/>
</dbReference>
<dbReference type="Gene3D" id="1.10.490.10">
    <property type="entry name" value="Globins"/>
    <property type="match status" value="1"/>
</dbReference>
<dbReference type="InterPro" id="IPR000971">
    <property type="entry name" value="Globin"/>
</dbReference>
<dbReference type="InterPro" id="IPR009050">
    <property type="entry name" value="Globin-like_sf"/>
</dbReference>
<dbReference type="InterPro" id="IPR012292">
    <property type="entry name" value="Globin/Proto"/>
</dbReference>
<dbReference type="InterPro" id="IPR050056">
    <property type="entry name" value="Hemoglobin_oxygen_transport"/>
</dbReference>
<dbReference type="PANTHER" id="PTHR11442">
    <property type="entry name" value="HEMOGLOBIN FAMILY MEMBER"/>
    <property type="match status" value="1"/>
</dbReference>
<dbReference type="Pfam" id="PF00042">
    <property type="entry name" value="Globin"/>
    <property type="match status" value="1"/>
</dbReference>
<dbReference type="SUPFAM" id="SSF46458">
    <property type="entry name" value="Globin-like"/>
    <property type="match status" value="1"/>
</dbReference>
<dbReference type="PROSITE" id="PS01033">
    <property type="entry name" value="GLOBIN"/>
    <property type="match status" value="1"/>
</dbReference>
<name>HBA_SOMMI</name>
<evidence type="ECO:0000250" key="1">
    <source>
        <dbReference type="UniProtKB" id="P01966"/>
    </source>
</evidence>
<evidence type="ECO:0000255" key="2">
    <source>
        <dbReference type="PROSITE-ProRule" id="PRU00238"/>
    </source>
</evidence>
<evidence type="ECO:0000269" key="3">
    <source>
    </source>
</evidence>
<evidence type="ECO:0000303" key="4">
    <source>
    </source>
</evidence>
<evidence type="ECO:0000305" key="5"/>
<gene>
    <name evidence="1" type="primary">HBA</name>
</gene>
<reference evidence="5" key="1">
    <citation type="journal article" date="2017" name="PLoS ONE">
        <title>The Greenland shark Somniosus microcephalus-Hemoglobins and ligand-binding properties.</title>
        <authorList>
            <person name="Russo R."/>
            <person name="Giordano D."/>
            <person name="Paredi G."/>
            <person name="Marchesani F."/>
            <person name="Milazzo L."/>
            <person name="Altomonte G."/>
            <person name="Del Canale P."/>
            <person name="Abbruzzetti S."/>
            <person name="Ascenzi P."/>
            <person name="di Prisco G."/>
            <person name="Viappiani C."/>
            <person name="Fago A."/>
            <person name="Bruno S."/>
            <person name="Smulevich G."/>
            <person name="Verde C."/>
        </authorList>
    </citation>
    <scope>PROTEIN SEQUENCE</scope>
    <scope>FUNCTION</scope>
    <scope>SUBUNIT</scope>
    <scope>TISSUE SPECIFICITY</scope>
    <scope>IDENTIFICATION BY MASS SPECTROMETRY</scope>
    <source>
        <tissue evidence="4">Erythrocyte</tissue>
    </source>
</reference>
<proteinExistence type="evidence at protein level"/>
<sequence length="124" mass="13391">PLSAADKTIIKHLTGSVRTNAEAWGAESLARLFATSPSTKTYFSKFNDFTANGKRLHGGKVLNAVADVTDHLDNLAVLHGTTLLVDPHNFPLLSQSLLVTLAAHLLALDKFLDEVAKALSSHYR</sequence>
<keyword id="KW-0903">Direct protein sequencing</keyword>
<keyword id="KW-0349">Heme</keyword>
<keyword id="KW-0408">Iron</keyword>
<keyword id="KW-0479">Metal-binding</keyword>
<keyword id="KW-0561">Oxygen transport</keyword>
<keyword id="KW-0813">Transport</keyword>
<organism evidence="4">
    <name type="scientific">Somniosus microcephalus</name>
    <name type="common">Greenland sleeper shark</name>
    <name type="synonym">Squalus microcephalus</name>
    <dbReference type="NCBI Taxonomy" id="191813"/>
    <lineage>
        <taxon>Eukaryota</taxon>
        <taxon>Metazoa</taxon>
        <taxon>Chordata</taxon>
        <taxon>Craniata</taxon>
        <taxon>Vertebrata</taxon>
        <taxon>Chondrichthyes</taxon>
        <taxon>Elasmobranchii</taxon>
        <taxon>Squalomorphii</taxon>
        <taxon>Squaliformes</taxon>
        <taxon>Somniosidae</taxon>
        <taxon>Somniosus</taxon>
    </lineage>
</organism>
<comment type="function">
    <text evidence="3">Involved in oxygen transport from gills to the various peripheral tissues.</text>
</comment>
<comment type="subunit">
    <text evidence="3">Hb 1 is a heterotetramer of two alpha and two beta-1 chains. Hb 2 is a heterotetramer of two alpha and two beta-2 chains. Hb 3 is a heterotetramer of two alpha and two beta-3 chains.</text>
</comment>
<comment type="tissue specificity">
    <text evidence="3">Red blood cells (at protein level).</text>
</comment>
<comment type="miscellaneous">
    <text evidence="3">This fish has three hemoglobins: Hb 1, Hb 2 and Hb 3. They all have a similar Bohr effect.</text>
</comment>
<comment type="similarity">
    <text evidence="2">Belongs to the globin family.</text>
</comment>
<protein>
    <recommendedName>
        <fullName evidence="1">Hemoglobin subunit alpha</fullName>
    </recommendedName>
    <alternativeName>
        <fullName evidence="1">Alpha-globin</fullName>
    </alternativeName>
    <alternativeName>
        <fullName evidence="4">Hemoglobin alpha chain</fullName>
    </alternativeName>
</protein>